<organism>
    <name type="scientific">Listeria welshimeri serovar 6b (strain ATCC 35897 / DSM 20650 / CCUG 15529 / CIP 8149 / NCTC 11857 / SLCC 5334 / V8)</name>
    <dbReference type="NCBI Taxonomy" id="386043"/>
    <lineage>
        <taxon>Bacteria</taxon>
        <taxon>Bacillati</taxon>
        <taxon>Bacillota</taxon>
        <taxon>Bacilli</taxon>
        <taxon>Bacillales</taxon>
        <taxon>Listeriaceae</taxon>
        <taxon>Listeria</taxon>
    </lineage>
</organism>
<proteinExistence type="inferred from homology"/>
<feature type="chain" id="PRO_1000047834" description="Probable septum site-determining protein MinC">
    <location>
        <begin position="1"/>
        <end position="225"/>
    </location>
</feature>
<keyword id="KW-0131">Cell cycle</keyword>
<keyword id="KW-0132">Cell division</keyword>
<keyword id="KW-0717">Septation</keyword>
<name>MINC_LISW6</name>
<sequence length="225" mass="25217">MKKNVQIKGTKDGISIFLSDKASILELQQELSQLLADKKQNPYSGEKLEVQVQIGNRLFSEEEELEISTIIHNNSQMEISAFYSNVMSKDDAKKWKERDQIFSMATIIRSGQVVQVPGDFLLIGDVNPGGQIRSNGNVFVLGNIKGIIHAGFEGDKNAVVAGKFLYPSQVRIADKVYGFDSEDYKEVVDTDLFSAFVNDTDEIVIDEIHKIRKIRPEISNFQGGR</sequence>
<protein>
    <recommendedName>
        <fullName evidence="1">Probable septum site-determining protein MinC</fullName>
    </recommendedName>
</protein>
<reference key="1">
    <citation type="journal article" date="2006" name="J. Bacteriol.">
        <title>Whole-genome sequence of Listeria welshimeri reveals common steps in genome reduction with Listeria innocua as compared to Listeria monocytogenes.</title>
        <authorList>
            <person name="Hain T."/>
            <person name="Steinweg C."/>
            <person name="Kuenne C.T."/>
            <person name="Billion A."/>
            <person name="Ghai R."/>
            <person name="Chatterjee S.S."/>
            <person name="Domann E."/>
            <person name="Kaerst U."/>
            <person name="Goesmann A."/>
            <person name="Bekel T."/>
            <person name="Bartels D."/>
            <person name="Kaiser O."/>
            <person name="Meyer F."/>
            <person name="Puehler A."/>
            <person name="Weisshaar B."/>
            <person name="Wehland J."/>
            <person name="Liang C."/>
            <person name="Dandekar T."/>
            <person name="Lampidis R."/>
            <person name="Kreft J."/>
            <person name="Goebel W."/>
            <person name="Chakraborty T."/>
        </authorList>
    </citation>
    <scope>NUCLEOTIDE SEQUENCE [LARGE SCALE GENOMIC DNA]</scope>
    <source>
        <strain>ATCC 35897 / DSM 20650 / CCUG 15529 / CIP 8149 / NCTC 11857 / SLCC 5334 / V8</strain>
    </source>
</reference>
<comment type="function">
    <text evidence="1">Cell division inhibitor that blocks the formation of polar Z ring septums. Rapidly oscillates between the poles of the cell to destabilize FtsZ filaments that have formed before they mature into polar Z rings. Prevents FtsZ polymerization.</text>
</comment>
<comment type="subunit">
    <text evidence="1">Interacts with MinD and FtsZ.</text>
</comment>
<comment type="similarity">
    <text evidence="1">Belongs to the MinC family.</text>
</comment>
<gene>
    <name evidence="1" type="primary">minC</name>
    <name type="ordered locus">lwe1558</name>
</gene>
<evidence type="ECO:0000255" key="1">
    <source>
        <dbReference type="HAMAP-Rule" id="MF_00267"/>
    </source>
</evidence>
<dbReference type="EMBL" id="AM263198">
    <property type="protein sequence ID" value="CAK20976.1"/>
    <property type="molecule type" value="Genomic_DNA"/>
</dbReference>
<dbReference type="RefSeq" id="WP_011702345.1">
    <property type="nucleotide sequence ID" value="NC_008555.1"/>
</dbReference>
<dbReference type="SMR" id="A0AIZ4"/>
<dbReference type="STRING" id="386043.lwe1558"/>
<dbReference type="GeneID" id="61189435"/>
<dbReference type="KEGG" id="lwe:lwe1558"/>
<dbReference type="eggNOG" id="COG0850">
    <property type="taxonomic scope" value="Bacteria"/>
</dbReference>
<dbReference type="HOGENOM" id="CLU_048711_1_1_9"/>
<dbReference type="OrthoDB" id="9790810at2"/>
<dbReference type="Proteomes" id="UP000000779">
    <property type="component" value="Chromosome"/>
</dbReference>
<dbReference type="GO" id="GO:0000902">
    <property type="term" value="P:cell morphogenesis"/>
    <property type="evidence" value="ECO:0007669"/>
    <property type="project" value="InterPro"/>
</dbReference>
<dbReference type="GO" id="GO:0000917">
    <property type="term" value="P:division septum assembly"/>
    <property type="evidence" value="ECO:0007669"/>
    <property type="project" value="UniProtKB-KW"/>
</dbReference>
<dbReference type="GO" id="GO:1901891">
    <property type="term" value="P:regulation of cell septum assembly"/>
    <property type="evidence" value="ECO:0007669"/>
    <property type="project" value="InterPro"/>
</dbReference>
<dbReference type="Gene3D" id="2.160.20.70">
    <property type="match status" value="1"/>
</dbReference>
<dbReference type="Gene3D" id="3.30.160.540">
    <property type="match status" value="1"/>
</dbReference>
<dbReference type="HAMAP" id="MF_00267">
    <property type="entry name" value="MinC"/>
    <property type="match status" value="1"/>
</dbReference>
<dbReference type="InterPro" id="IPR016098">
    <property type="entry name" value="CAP/MinC_C"/>
</dbReference>
<dbReference type="InterPro" id="IPR013033">
    <property type="entry name" value="MinC"/>
</dbReference>
<dbReference type="InterPro" id="IPR036145">
    <property type="entry name" value="MinC_C_sf"/>
</dbReference>
<dbReference type="InterPro" id="IPR055219">
    <property type="entry name" value="MinC_N_1"/>
</dbReference>
<dbReference type="InterPro" id="IPR005526">
    <property type="entry name" value="Septum_form_inhib_MinC_C"/>
</dbReference>
<dbReference type="NCBIfam" id="NF001772">
    <property type="entry name" value="PRK00513.1-3"/>
    <property type="match status" value="1"/>
</dbReference>
<dbReference type="PANTHER" id="PTHR34108">
    <property type="entry name" value="SEPTUM SITE-DETERMINING PROTEIN MINC"/>
    <property type="match status" value="1"/>
</dbReference>
<dbReference type="PANTHER" id="PTHR34108:SF1">
    <property type="entry name" value="SEPTUM SITE-DETERMINING PROTEIN MINC"/>
    <property type="match status" value="1"/>
</dbReference>
<dbReference type="Pfam" id="PF03775">
    <property type="entry name" value="MinC_C"/>
    <property type="match status" value="1"/>
</dbReference>
<dbReference type="Pfam" id="PF22642">
    <property type="entry name" value="MinC_N_1"/>
    <property type="match status" value="1"/>
</dbReference>
<dbReference type="SUPFAM" id="SSF63848">
    <property type="entry name" value="Cell-division inhibitor MinC, C-terminal domain"/>
    <property type="match status" value="1"/>
</dbReference>
<accession>A0AIZ4</accession>